<proteinExistence type="inferred from homology"/>
<comment type="function">
    <text evidence="1">Joins adenosylcobinamide-GDP and alpha-ribazole to generate adenosylcobalamin (Ado-cobalamin). Also synthesizes adenosylcobalamin 5'-phosphate from adenosylcobinamide-GDP and alpha-ribazole 5'-phosphate.</text>
</comment>
<comment type="catalytic activity">
    <reaction evidence="1">
        <text>alpha-ribazole + adenosylcob(III)inamide-GDP = adenosylcob(III)alamin + GMP + H(+)</text>
        <dbReference type="Rhea" id="RHEA:16049"/>
        <dbReference type="ChEBI" id="CHEBI:10329"/>
        <dbReference type="ChEBI" id="CHEBI:15378"/>
        <dbReference type="ChEBI" id="CHEBI:18408"/>
        <dbReference type="ChEBI" id="CHEBI:58115"/>
        <dbReference type="ChEBI" id="CHEBI:60487"/>
        <dbReference type="EC" id="2.7.8.26"/>
    </reaction>
</comment>
<comment type="catalytic activity">
    <reaction evidence="1">
        <text>alpha-ribazole 5'-phosphate + adenosylcob(III)inamide-GDP = adenosylcob(III)alamin 5'-phosphate + GMP + H(+)</text>
        <dbReference type="Rhea" id="RHEA:23560"/>
        <dbReference type="ChEBI" id="CHEBI:15378"/>
        <dbReference type="ChEBI" id="CHEBI:57918"/>
        <dbReference type="ChEBI" id="CHEBI:58115"/>
        <dbReference type="ChEBI" id="CHEBI:60487"/>
        <dbReference type="ChEBI" id="CHEBI:60493"/>
        <dbReference type="EC" id="2.7.8.26"/>
    </reaction>
</comment>
<comment type="cofactor">
    <cofactor evidence="1">
        <name>Mg(2+)</name>
        <dbReference type="ChEBI" id="CHEBI:18420"/>
    </cofactor>
</comment>
<comment type="pathway">
    <text evidence="1">Cofactor biosynthesis; adenosylcobalamin biosynthesis; adenosylcobalamin from cob(II)yrinate a,c-diamide: step 7/7.</text>
</comment>
<comment type="subcellular location">
    <subcellularLocation>
        <location evidence="1">Cell inner membrane</location>
        <topology evidence="1">Multi-pass membrane protein</topology>
    </subcellularLocation>
</comment>
<comment type="similarity">
    <text evidence="1">Belongs to the CobS family.</text>
</comment>
<feature type="chain" id="PRO_1000132596" description="Adenosylcobinamide-GDP ribazoletransferase">
    <location>
        <begin position="1"/>
        <end position="247"/>
    </location>
</feature>
<feature type="transmembrane region" description="Helical" evidence="1">
    <location>
        <begin position="34"/>
        <end position="54"/>
    </location>
</feature>
<feature type="transmembrane region" description="Helical" evidence="1">
    <location>
        <begin position="59"/>
        <end position="79"/>
    </location>
</feature>
<feature type="transmembrane region" description="Helical" evidence="1">
    <location>
        <begin position="113"/>
        <end position="133"/>
    </location>
</feature>
<feature type="transmembrane region" description="Helical" evidence="1">
    <location>
        <begin position="138"/>
        <end position="158"/>
    </location>
</feature>
<feature type="transmembrane region" description="Helical" evidence="1">
    <location>
        <begin position="187"/>
        <end position="207"/>
    </location>
</feature>
<sequence>MSKLFWAMLAFISRLPVPSRWSQGLDFEQYSRGIVMFPFIGLILGGVSGLIFILLQPWCGIPLAALFCILALALLTGGFHLDGLADTCDGIFSARRRERMLEIMRDSRLGTHGGLALIFVLLAKILVVSELALRGTPMLAALAAACAAGRGSAVLLMYRHRYAREEGLGNVFIGKVSGRQTCITLGLAVIVATVLLPGMQGLAAMVVTCAAIFILGQLLKRTLGGQTGDTLGAAIELGELIFLLALL</sequence>
<organism>
    <name type="scientific">Salmonella dublin (strain CT_02021853)</name>
    <dbReference type="NCBI Taxonomy" id="439851"/>
    <lineage>
        <taxon>Bacteria</taxon>
        <taxon>Pseudomonadati</taxon>
        <taxon>Pseudomonadota</taxon>
        <taxon>Gammaproteobacteria</taxon>
        <taxon>Enterobacterales</taxon>
        <taxon>Enterobacteriaceae</taxon>
        <taxon>Salmonella</taxon>
    </lineage>
</organism>
<dbReference type="EC" id="2.7.8.26" evidence="1"/>
<dbReference type="EMBL" id="CP001144">
    <property type="protein sequence ID" value="ACH75713.1"/>
    <property type="molecule type" value="Genomic_DNA"/>
</dbReference>
<dbReference type="RefSeq" id="WP_000039997.1">
    <property type="nucleotide sequence ID" value="NC_011205.1"/>
</dbReference>
<dbReference type="KEGG" id="sed:SeD_A2352"/>
<dbReference type="HOGENOM" id="CLU_057426_3_1_6"/>
<dbReference type="UniPathway" id="UPA00148">
    <property type="reaction ID" value="UER00238"/>
</dbReference>
<dbReference type="Proteomes" id="UP000008322">
    <property type="component" value="Chromosome"/>
</dbReference>
<dbReference type="GO" id="GO:0005886">
    <property type="term" value="C:plasma membrane"/>
    <property type="evidence" value="ECO:0007669"/>
    <property type="project" value="UniProtKB-SubCell"/>
</dbReference>
<dbReference type="GO" id="GO:0051073">
    <property type="term" value="F:adenosylcobinamide-GDP ribazoletransferase activity"/>
    <property type="evidence" value="ECO:0007669"/>
    <property type="project" value="UniProtKB-UniRule"/>
</dbReference>
<dbReference type="GO" id="GO:0008818">
    <property type="term" value="F:cobalamin 5'-phosphate synthase activity"/>
    <property type="evidence" value="ECO:0007669"/>
    <property type="project" value="UniProtKB-UniRule"/>
</dbReference>
<dbReference type="GO" id="GO:0009236">
    <property type="term" value="P:cobalamin biosynthetic process"/>
    <property type="evidence" value="ECO:0007669"/>
    <property type="project" value="UniProtKB-UniRule"/>
</dbReference>
<dbReference type="HAMAP" id="MF_00719">
    <property type="entry name" value="CobS"/>
    <property type="match status" value="1"/>
</dbReference>
<dbReference type="InterPro" id="IPR003805">
    <property type="entry name" value="CobS"/>
</dbReference>
<dbReference type="NCBIfam" id="TIGR00317">
    <property type="entry name" value="cobS"/>
    <property type="match status" value="1"/>
</dbReference>
<dbReference type="PANTHER" id="PTHR34148">
    <property type="entry name" value="ADENOSYLCOBINAMIDE-GDP RIBAZOLETRANSFERASE"/>
    <property type="match status" value="1"/>
</dbReference>
<dbReference type="PANTHER" id="PTHR34148:SF1">
    <property type="entry name" value="ADENOSYLCOBINAMIDE-GDP RIBAZOLETRANSFERASE"/>
    <property type="match status" value="1"/>
</dbReference>
<dbReference type="Pfam" id="PF02654">
    <property type="entry name" value="CobS"/>
    <property type="match status" value="1"/>
</dbReference>
<name>COBS_SALDC</name>
<protein>
    <recommendedName>
        <fullName evidence="1">Adenosylcobinamide-GDP ribazoletransferase</fullName>
        <ecNumber evidence="1">2.7.8.26</ecNumber>
    </recommendedName>
    <alternativeName>
        <fullName evidence="1">Cobalamin synthase</fullName>
    </alternativeName>
    <alternativeName>
        <fullName evidence="1">Cobalamin-5'-phosphate synthase</fullName>
    </alternativeName>
</protein>
<keyword id="KW-0997">Cell inner membrane</keyword>
<keyword id="KW-1003">Cell membrane</keyword>
<keyword id="KW-0169">Cobalamin biosynthesis</keyword>
<keyword id="KW-0460">Magnesium</keyword>
<keyword id="KW-0472">Membrane</keyword>
<keyword id="KW-0808">Transferase</keyword>
<keyword id="KW-0812">Transmembrane</keyword>
<keyword id="KW-1133">Transmembrane helix</keyword>
<reference key="1">
    <citation type="journal article" date="2011" name="J. Bacteriol.">
        <title>Comparative genomics of 28 Salmonella enterica isolates: evidence for CRISPR-mediated adaptive sublineage evolution.</title>
        <authorList>
            <person name="Fricke W.F."/>
            <person name="Mammel M.K."/>
            <person name="McDermott P.F."/>
            <person name="Tartera C."/>
            <person name="White D.G."/>
            <person name="Leclerc J.E."/>
            <person name="Ravel J."/>
            <person name="Cebula T.A."/>
        </authorList>
    </citation>
    <scope>NUCLEOTIDE SEQUENCE [LARGE SCALE GENOMIC DNA]</scope>
    <source>
        <strain>CT_02021853</strain>
    </source>
</reference>
<evidence type="ECO:0000255" key="1">
    <source>
        <dbReference type="HAMAP-Rule" id="MF_00719"/>
    </source>
</evidence>
<gene>
    <name evidence="1" type="primary">cobS</name>
    <name type="ordered locus">SeD_A2352</name>
</gene>
<accession>B5FLY5</accession>